<organism>
    <name type="scientific">Drosophila mojavensis</name>
    <name type="common">Fruit fly</name>
    <dbReference type="NCBI Taxonomy" id="7230"/>
    <lineage>
        <taxon>Eukaryota</taxon>
        <taxon>Metazoa</taxon>
        <taxon>Ecdysozoa</taxon>
        <taxon>Arthropoda</taxon>
        <taxon>Hexapoda</taxon>
        <taxon>Insecta</taxon>
        <taxon>Pterygota</taxon>
        <taxon>Neoptera</taxon>
        <taxon>Endopterygota</taxon>
        <taxon>Diptera</taxon>
        <taxon>Brachycera</taxon>
        <taxon>Muscomorpha</taxon>
        <taxon>Ephydroidea</taxon>
        <taxon>Drosophilidae</taxon>
        <taxon>Drosophila</taxon>
    </lineage>
</organism>
<dbReference type="EC" id="2.8.1.12" evidence="2"/>
<dbReference type="EMBL" id="CH933806">
    <property type="protein sequence ID" value="EDW13640.1"/>
    <property type="molecule type" value="Genomic_DNA"/>
</dbReference>
<dbReference type="SMR" id="B4KBH3"/>
<dbReference type="FunCoup" id="B4KBH3">
    <property type="interactions" value="606"/>
</dbReference>
<dbReference type="EnsemblMetazoa" id="FBtr0429167">
    <property type="protein sequence ID" value="FBpp0386649"/>
    <property type="gene ID" value="FBgn0281273"/>
</dbReference>
<dbReference type="EnsemblMetazoa" id="XM_032728250.2">
    <property type="protein sequence ID" value="XP_032584141.1"/>
    <property type="gene ID" value="LOC6572025"/>
</dbReference>
<dbReference type="eggNOG" id="KOG3307">
    <property type="taxonomic scope" value="Eukaryota"/>
</dbReference>
<dbReference type="HOGENOM" id="CLU_045449_0_0_1"/>
<dbReference type="InParanoid" id="B4KBH3"/>
<dbReference type="OMA" id="KIRSQWN"/>
<dbReference type="OrthoDB" id="5531344at2759"/>
<dbReference type="PhylomeDB" id="B4KBH3"/>
<dbReference type="UniPathway" id="UPA00344"/>
<dbReference type="Proteomes" id="UP000009192">
    <property type="component" value="Unassembled WGS sequence"/>
</dbReference>
<dbReference type="GO" id="GO:0140672">
    <property type="term" value="C:ATAC complex"/>
    <property type="evidence" value="ECO:0007669"/>
    <property type="project" value="EnsemblMetazoa"/>
</dbReference>
<dbReference type="GO" id="GO:0005829">
    <property type="term" value="C:cytosol"/>
    <property type="evidence" value="ECO:0000250"/>
    <property type="project" value="UniProtKB"/>
</dbReference>
<dbReference type="GO" id="GO:1990140">
    <property type="term" value="C:molybdopterin synthase complex"/>
    <property type="evidence" value="ECO:0000250"/>
    <property type="project" value="UniProtKB"/>
</dbReference>
<dbReference type="GO" id="GO:0005700">
    <property type="term" value="C:polytene chromosome"/>
    <property type="evidence" value="ECO:0007669"/>
    <property type="project" value="EnsemblMetazoa"/>
</dbReference>
<dbReference type="GO" id="GO:0030366">
    <property type="term" value="F:molybdopterin synthase activity"/>
    <property type="evidence" value="ECO:0007669"/>
    <property type="project" value="UniProtKB-UniRule"/>
</dbReference>
<dbReference type="GO" id="GO:0006338">
    <property type="term" value="P:chromatin remodeling"/>
    <property type="evidence" value="ECO:0007669"/>
    <property type="project" value="EnsemblMetazoa"/>
</dbReference>
<dbReference type="GO" id="GO:0006777">
    <property type="term" value="P:Mo-molybdopterin cofactor biosynthetic process"/>
    <property type="evidence" value="ECO:0000250"/>
    <property type="project" value="UniProtKB"/>
</dbReference>
<dbReference type="CDD" id="cd00756">
    <property type="entry name" value="MoaE"/>
    <property type="match status" value="1"/>
</dbReference>
<dbReference type="FunFam" id="3.90.1170.40:FF:000002">
    <property type="entry name" value="Molybdopterin synthase catalytic subunit"/>
    <property type="match status" value="1"/>
</dbReference>
<dbReference type="Gene3D" id="3.90.1170.40">
    <property type="entry name" value="Molybdopterin biosynthesis MoaE subunit"/>
    <property type="match status" value="1"/>
</dbReference>
<dbReference type="HAMAP" id="MF_03052">
    <property type="entry name" value="MOC2B"/>
    <property type="match status" value="1"/>
</dbReference>
<dbReference type="InterPro" id="IPR036563">
    <property type="entry name" value="MoaE_sf"/>
</dbReference>
<dbReference type="InterPro" id="IPR028888">
    <property type="entry name" value="MOCS2B_euk"/>
</dbReference>
<dbReference type="InterPro" id="IPR003448">
    <property type="entry name" value="Mopterin_biosynth_MoaE"/>
</dbReference>
<dbReference type="PANTHER" id="PTHR23404">
    <property type="entry name" value="MOLYBDOPTERIN SYNTHASE RELATED"/>
    <property type="match status" value="1"/>
</dbReference>
<dbReference type="Pfam" id="PF02391">
    <property type="entry name" value="MoaE"/>
    <property type="match status" value="1"/>
</dbReference>
<dbReference type="SUPFAM" id="SSF54690">
    <property type="entry name" value="Molybdopterin synthase subunit MoaE"/>
    <property type="match status" value="1"/>
</dbReference>
<proteinExistence type="inferred from homology"/>
<feature type="chain" id="PRO_0000369337" description="Molybdopterin synthase catalytic subunit">
    <location>
        <begin position="1"/>
        <end position="366"/>
    </location>
</feature>
<feature type="binding site" evidence="2">
    <location>
        <begin position="101"/>
        <end position="102"/>
    </location>
    <ligand>
        <name>substrate</name>
    </ligand>
</feature>
<feature type="binding site" evidence="2">
    <location>
        <position position="117"/>
    </location>
    <ligand>
        <name>substrate</name>
    </ligand>
</feature>
<feature type="binding site" evidence="2">
    <location>
        <begin position="124"/>
        <end position="126"/>
    </location>
    <ligand>
        <name>substrate</name>
    </ligand>
</feature>
<evidence type="ECO:0000250" key="1">
    <source>
        <dbReference type="UniProtKB" id="Q9VBX2"/>
    </source>
</evidence>
<evidence type="ECO:0000255" key="2">
    <source>
        <dbReference type="HAMAP-Rule" id="MF_03052"/>
    </source>
</evidence>
<accession>B4KBH3</accession>
<protein>
    <recommendedName>
        <fullName evidence="2">Molybdopterin synthase catalytic subunit</fullName>
        <ecNumber evidence="2">2.8.1.12</ecNumber>
    </recommendedName>
    <alternativeName>
        <fullName evidence="2">Molybdenum cofactor synthesis protein 2 large subunit</fullName>
    </alternativeName>
    <alternativeName>
        <fullName evidence="2">Molybdenum cofactor synthesis protein 2B</fullName>
        <shortName evidence="2">MOCS2B</shortName>
    </alternativeName>
</protein>
<sequence>MDHIKLIRNKIDINHIHQLIIDQSCGACSVFVGTTRDHFEGKKVISLEYEAYESMALKEMGKICSELRIRWPTLKHIAIYHRLGSVPVAEESVVIAVSAPHRPAALESVSFAVDKLKSSVPIWKKEIYENDQIGEWKANMECPWPQFTETSSNAFEYSLCKIERQVENISESKLVQIRVSDIELTRRIKCFLKRKRDEINLHNIIDFKQQLRDSPRAESMLPKDSCARTQSILVKQQQSISHIKVHRAFEDRRQTRPDYSSQLNKLMATKHKHCELVKSNVLKNARLQNIEEYMRITPDDEDNIYNRIKNIENRILILESTSPEYKYYIKLGKESNNINKKESKKGLYQSDRLSEFISGIKRQYEL</sequence>
<reference key="1">
    <citation type="journal article" date="2007" name="Nature">
        <title>Evolution of genes and genomes on the Drosophila phylogeny.</title>
        <authorList>
            <consortium name="Drosophila 12 genomes consortium"/>
        </authorList>
    </citation>
    <scope>NUCLEOTIDE SEQUENCE [LARGE SCALE GENOMIC DNA]</scope>
    <source>
        <strain>Tucson 15081-1352.22</strain>
    </source>
</reference>
<comment type="function">
    <text evidence="2">Catalytic subunit of the molybdopterin synthase complex, a complex that catalyzes the conversion of precursor Z into molybdopterin. Acts by mediating the incorporation of 2 sulfur atoms from thiocarboxylated Mocs2A into precursor Z to generate a dithiolene group.</text>
</comment>
<comment type="catalytic activity">
    <reaction evidence="2">
        <text>2 [molybdopterin-synthase sulfur-carrier protein]-C-terminal-Gly-aminoethanethioate + cyclic pyranopterin phosphate + H2O = molybdopterin + 2 [molybdopterin-synthase sulfur-carrier protein]-C-terminal Gly-Gly + 2 H(+)</text>
        <dbReference type="Rhea" id="RHEA:26333"/>
        <dbReference type="Rhea" id="RHEA-COMP:12202"/>
        <dbReference type="Rhea" id="RHEA-COMP:19907"/>
        <dbReference type="ChEBI" id="CHEBI:15377"/>
        <dbReference type="ChEBI" id="CHEBI:15378"/>
        <dbReference type="ChEBI" id="CHEBI:58698"/>
        <dbReference type="ChEBI" id="CHEBI:59648"/>
        <dbReference type="ChEBI" id="CHEBI:90778"/>
        <dbReference type="ChEBI" id="CHEBI:232372"/>
        <dbReference type="EC" id="2.8.1.12"/>
    </reaction>
</comment>
<comment type="pathway">
    <text evidence="2">Cofactor biosynthesis; molybdopterin biosynthesis.</text>
</comment>
<comment type="subunit">
    <text evidence="2">Heterotetramer; composed of 2 small (Mocs2A) and 2 large (Mocs2B) subunits.</text>
</comment>
<comment type="subcellular location">
    <subcellularLocation>
        <location evidence="2">Cytoplasm</location>
    </subcellularLocation>
</comment>
<comment type="miscellaneous">
    <text>This protein is produced by a bicistronic gene which also produces the small subunit (Mocs2A).</text>
</comment>
<comment type="similarity">
    <text evidence="2">Belongs to the MoaE family. MOCS2B subfamily.</text>
</comment>
<gene>
    <name evidence="1" type="primary">Mocs2B</name>
    <name evidence="2" type="synonym">Mocs2</name>
    <name type="ORF">GI23778</name>
</gene>
<keyword id="KW-0963">Cytoplasm</keyword>
<keyword id="KW-0501">Molybdenum cofactor biosynthesis</keyword>
<keyword id="KW-1185">Reference proteome</keyword>
<keyword id="KW-0808">Transferase</keyword>
<name>MOC2B_DROMO</name>